<proteinExistence type="evidence at protein level"/>
<comment type="function">
    <text evidence="1">Malate transporter.</text>
</comment>
<comment type="subcellular location">
    <subcellularLocation>
        <location evidence="3">Endoplasmic reticulum membrane</location>
        <topology evidence="3">Multi-pass membrane protein</topology>
    </subcellularLocation>
</comment>
<comment type="similarity">
    <text evidence="3">Belongs to the aromatic acid exporter (TC 2.A.85) family.</text>
</comment>
<comment type="sequence caution" evidence="3">
    <conflict type="erroneous initiation">
        <sequence resource="EMBL-CDS" id="AAD49983"/>
    </conflict>
    <text>Truncated N-terminus.</text>
</comment>
<protein>
    <recommendedName>
        <fullName>Aluminum-activated malate transporter 5</fullName>
        <shortName>AtALMT5</shortName>
    </recommendedName>
</protein>
<keyword id="KW-0175">Coiled coil</keyword>
<keyword id="KW-0256">Endoplasmic reticulum</keyword>
<keyword id="KW-0407">Ion channel</keyword>
<keyword id="KW-0406">Ion transport</keyword>
<keyword id="KW-0472">Membrane</keyword>
<keyword id="KW-1185">Reference proteome</keyword>
<keyword id="KW-0812">Transmembrane</keyword>
<keyword id="KW-1133">Transmembrane helix</keyword>
<keyword id="KW-0813">Transport</keyword>
<feature type="chain" id="PRO_0000401464" description="Aluminum-activated malate transporter 5">
    <location>
        <begin position="1"/>
        <end position="537"/>
    </location>
</feature>
<feature type="transmembrane region" description="Helical" evidence="2">
    <location>
        <begin position="56"/>
        <end position="76"/>
    </location>
</feature>
<feature type="transmembrane region" description="Helical" evidence="2">
    <location>
        <begin position="86"/>
        <end position="106"/>
    </location>
</feature>
<feature type="transmembrane region" description="Helical" evidence="2">
    <location>
        <begin position="109"/>
        <end position="129"/>
    </location>
</feature>
<feature type="transmembrane region" description="Helical" evidence="2">
    <location>
        <begin position="131"/>
        <end position="151"/>
    </location>
</feature>
<feature type="transmembrane region" description="Helical" evidence="2">
    <location>
        <begin position="196"/>
        <end position="216"/>
    </location>
</feature>
<feature type="coiled-coil region" evidence="2">
    <location>
        <begin position="373"/>
        <end position="435"/>
    </location>
</feature>
<evidence type="ECO:0000250" key="1"/>
<evidence type="ECO:0000255" key="2"/>
<evidence type="ECO:0000305" key="3"/>
<sequence length="537" mass="60222">MGGKMGSVPEQNTEKLLWQSSDVADSRDSKFRCCSWRALYEAPAKLYALGHSDRRKLYFSIKMGIALALCSFVIFLKEPLQDASKFAVWAILTVVLIFEYYVGATLVKGFNRALGTMLAGGLALGVAQLSVLAGEFEEVIIVICIFLAGFGASYLKLYASMKPYEYAFRVFKLTYCIVLVSGNNSRDFLSTAYYRILLIGLGATICLLVNVFLFPIWAGEDLHKLVAKNFKNVANSLEGCVNGYLQCVEYERIPSKILTYQASDDPLYSGYRSAVQSTSQEDSLLDFAIWEPPHGPYKTFNHPWKNYVKLSGAVRHCAFTVMAMHGCILSEIQASPEKRHVFSNELRRVGNEGAKVLRLFGEKVEKMEKLSLSLGEILKDVQRAAEALQMKIDSKSYLLVNSESWAAIKEQAEAEEARENDQEAKDDETKVIKSLSQIWDTNNNNNHQSNDQSQHWMSTESMMLKNREMWPSMSFIDGTVVNEIECKVYESASSLSLATFASLLIEFVARLQNIVNAFEELSTKAGFKDAVDQIPKV</sequence>
<gene>
    <name type="primary">ALMT5</name>
    <name type="ordered locus">At1g68600</name>
    <name type="ORF">F24J5.16</name>
</gene>
<accession>Q93Z29</accession>
<accession>Q9SX23</accession>
<name>ALMT5_ARATH</name>
<dbReference type="EMBL" id="AC008075">
    <property type="protein sequence ID" value="AAD49983.1"/>
    <property type="status" value="ALT_INIT"/>
    <property type="molecule type" value="Genomic_DNA"/>
</dbReference>
<dbReference type="EMBL" id="CP002684">
    <property type="protein sequence ID" value="AEE34818.1"/>
    <property type="molecule type" value="Genomic_DNA"/>
</dbReference>
<dbReference type="EMBL" id="AY058190">
    <property type="protein sequence ID" value="AAL25603.1"/>
    <property type="molecule type" value="mRNA"/>
</dbReference>
<dbReference type="EMBL" id="AY142004">
    <property type="protein sequence ID" value="AAM98268.1"/>
    <property type="molecule type" value="mRNA"/>
</dbReference>
<dbReference type="PIR" id="D96710">
    <property type="entry name" value="D96710"/>
</dbReference>
<dbReference type="RefSeq" id="NP_564935.1">
    <property type="nucleotide sequence ID" value="NM_105532.5"/>
</dbReference>
<dbReference type="SMR" id="Q93Z29"/>
<dbReference type="FunCoup" id="Q93Z29">
    <property type="interactions" value="26"/>
</dbReference>
<dbReference type="STRING" id="3702.Q93Z29"/>
<dbReference type="TCDB" id="2.A.85.2.2">
    <property type="family name" value="the aromatic acid exporter (arae) family"/>
</dbReference>
<dbReference type="iPTMnet" id="Q93Z29"/>
<dbReference type="PaxDb" id="3702-AT1G68600.1"/>
<dbReference type="ProteomicsDB" id="244940"/>
<dbReference type="EnsemblPlants" id="AT1G68600.1">
    <property type="protein sequence ID" value="AT1G68600.1"/>
    <property type="gene ID" value="AT1G68600"/>
</dbReference>
<dbReference type="GeneID" id="843190"/>
<dbReference type="Gramene" id="AT1G68600.1">
    <property type="protein sequence ID" value="AT1G68600.1"/>
    <property type="gene ID" value="AT1G68600"/>
</dbReference>
<dbReference type="KEGG" id="ath:AT1G68600"/>
<dbReference type="Araport" id="AT1G68600"/>
<dbReference type="TAIR" id="AT1G68600"/>
<dbReference type="eggNOG" id="KOG4711">
    <property type="taxonomic scope" value="Eukaryota"/>
</dbReference>
<dbReference type="HOGENOM" id="CLU_020841_1_2_1"/>
<dbReference type="InParanoid" id="Q93Z29"/>
<dbReference type="OMA" id="VVLIFEY"/>
<dbReference type="PhylomeDB" id="Q93Z29"/>
<dbReference type="PRO" id="PR:Q93Z29"/>
<dbReference type="Proteomes" id="UP000006548">
    <property type="component" value="Chromosome 1"/>
</dbReference>
<dbReference type="ExpressionAtlas" id="Q93Z29">
    <property type="expression patterns" value="baseline and differential"/>
</dbReference>
<dbReference type="GO" id="GO:0005789">
    <property type="term" value="C:endoplasmic reticulum membrane"/>
    <property type="evidence" value="ECO:0007669"/>
    <property type="project" value="UniProtKB-SubCell"/>
</dbReference>
<dbReference type="GO" id="GO:0015743">
    <property type="term" value="P:malate transport"/>
    <property type="evidence" value="ECO:0007669"/>
    <property type="project" value="InterPro"/>
</dbReference>
<dbReference type="GO" id="GO:0034220">
    <property type="term" value="P:monoatomic ion transmembrane transport"/>
    <property type="evidence" value="ECO:0007669"/>
    <property type="project" value="UniProtKB-KW"/>
</dbReference>
<dbReference type="InterPro" id="IPR020966">
    <property type="entry name" value="ALMT"/>
</dbReference>
<dbReference type="PANTHER" id="PTHR31086">
    <property type="entry name" value="ALUMINUM-ACTIVATED MALATE TRANSPORTER 10"/>
    <property type="match status" value="1"/>
</dbReference>
<dbReference type="Pfam" id="PF11744">
    <property type="entry name" value="ALMT"/>
    <property type="match status" value="1"/>
</dbReference>
<reference key="1">
    <citation type="journal article" date="2000" name="Nature">
        <title>Sequence and analysis of chromosome 1 of the plant Arabidopsis thaliana.</title>
        <authorList>
            <person name="Theologis A."/>
            <person name="Ecker J.R."/>
            <person name="Palm C.J."/>
            <person name="Federspiel N.A."/>
            <person name="Kaul S."/>
            <person name="White O."/>
            <person name="Alonso J."/>
            <person name="Altafi H."/>
            <person name="Araujo R."/>
            <person name="Bowman C.L."/>
            <person name="Brooks S.Y."/>
            <person name="Buehler E."/>
            <person name="Chan A."/>
            <person name="Chao Q."/>
            <person name="Chen H."/>
            <person name="Cheuk R.F."/>
            <person name="Chin C.W."/>
            <person name="Chung M.K."/>
            <person name="Conn L."/>
            <person name="Conway A.B."/>
            <person name="Conway A.R."/>
            <person name="Creasy T.H."/>
            <person name="Dewar K."/>
            <person name="Dunn P."/>
            <person name="Etgu P."/>
            <person name="Feldblyum T.V."/>
            <person name="Feng J.-D."/>
            <person name="Fong B."/>
            <person name="Fujii C.Y."/>
            <person name="Gill J.E."/>
            <person name="Goldsmith A.D."/>
            <person name="Haas B."/>
            <person name="Hansen N.F."/>
            <person name="Hughes B."/>
            <person name="Huizar L."/>
            <person name="Hunter J.L."/>
            <person name="Jenkins J."/>
            <person name="Johnson-Hopson C."/>
            <person name="Khan S."/>
            <person name="Khaykin E."/>
            <person name="Kim C.J."/>
            <person name="Koo H.L."/>
            <person name="Kremenetskaia I."/>
            <person name="Kurtz D.B."/>
            <person name="Kwan A."/>
            <person name="Lam B."/>
            <person name="Langin-Hooper S."/>
            <person name="Lee A."/>
            <person name="Lee J.M."/>
            <person name="Lenz C.A."/>
            <person name="Li J.H."/>
            <person name="Li Y.-P."/>
            <person name="Lin X."/>
            <person name="Liu S.X."/>
            <person name="Liu Z.A."/>
            <person name="Luros J.S."/>
            <person name="Maiti R."/>
            <person name="Marziali A."/>
            <person name="Militscher J."/>
            <person name="Miranda M."/>
            <person name="Nguyen M."/>
            <person name="Nierman W.C."/>
            <person name="Osborne B.I."/>
            <person name="Pai G."/>
            <person name="Peterson J."/>
            <person name="Pham P.K."/>
            <person name="Rizzo M."/>
            <person name="Rooney T."/>
            <person name="Rowley D."/>
            <person name="Sakano H."/>
            <person name="Salzberg S.L."/>
            <person name="Schwartz J.R."/>
            <person name="Shinn P."/>
            <person name="Southwick A.M."/>
            <person name="Sun H."/>
            <person name="Tallon L.J."/>
            <person name="Tambunga G."/>
            <person name="Toriumi M.J."/>
            <person name="Town C.D."/>
            <person name="Utterback T."/>
            <person name="Van Aken S."/>
            <person name="Vaysberg M."/>
            <person name="Vysotskaia V.S."/>
            <person name="Walker M."/>
            <person name="Wu D."/>
            <person name="Yu G."/>
            <person name="Fraser C.M."/>
            <person name="Venter J.C."/>
            <person name="Davis R.W."/>
        </authorList>
    </citation>
    <scope>NUCLEOTIDE SEQUENCE [LARGE SCALE GENOMIC DNA]</scope>
    <source>
        <strain>cv. Columbia</strain>
    </source>
</reference>
<reference key="2">
    <citation type="journal article" date="2017" name="Plant J.">
        <title>Araport11: a complete reannotation of the Arabidopsis thaliana reference genome.</title>
        <authorList>
            <person name="Cheng C.Y."/>
            <person name="Krishnakumar V."/>
            <person name="Chan A.P."/>
            <person name="Thibaud-Nissen F."/>
            <person name="Schobel S."/>
            <person name="Town C.D."/>
        </authorList>
    </citation>
    <scope>GENOME REANNOTATION</scope>
    <source>
        <strain>cv. Columbia</strain>
    </source>
</reference>
<reference key="3">
    <citation type="journal article" date="2003" name="Science">
        <title>Empirical analysis of transcriptional activity in the Arabidopsis genome.</title>
        <authorList>
            <person name="Yamada K."/>
            <person name="Lim J."/>
            <person name="Dale J.M."/>
            <person name="Chen H."/>
            <person name="Shinn P."/>
            <person name="Palm C.J."/>
            <person name="Southwick A.M."/>
            <person name="Wu H.C."/>
            <person name="Kim C.J."/>
            <person name="Nguyen M."/>
            <person name="Pham P.K."/>
            <person name="Cheuk R.F."/>
            <person name="Karlin-Newmann G."/>
            <person name="Liu S.X."/>
            <person name="Lam B."/>
            <person name="Sakano H."/>
            <person name="Wu T."/>
            <person name="Yu G."/>
            <person name="Miranda M."/>
            <person name="Quach H.L."/>
            <person name="Tripp M."/>
            <person name="Chang C.H."/>
            <person name="Lee J.M."/>
            <person name="Toriumi M.J."/>
            <person name="Chan M.M."/>
            <person name="Tang C.C."/>
            <person name="Onodera C.S."/>
            <person name="Deng J.M."/>
            <person name="Akiyama K."/>
            <person name="Ansari Y."/>
            <person name="Arakawa T."/>
            <person name="Banh J."/>
            <person name="Banno F."/>
            <person name="Bowser L."/>
            <person name="Brooks S.Y."/>
            <person name="Carninci P."/>
            <person name="Chao Q."/>
            <person name="Choy N."/>
            <person name="Enju A."/>
            <person name="Goldsmith A.D."/>
            <person name="Gurjal M."/>
            <person name="Hansen N.F."/>
            <person name="Hayashizaki Y."/>
            <person name="Johnson-Hopson C."/>
            <person name="Hsuan V.W."/>
            <person name="Iida K."/>
            <person name="Karnes M."/>
            <person name="Khan S."/>
            <person name="Koesema E."/>
            <person name="Ishida J."/>
            <person name="Jiang P.X."/>
            <person name="Jones T."/>
            <person name="Kawai J."/>
            <person name="Kamiya A."/>
            <person name="Meyers C."/>
            <person name="Nakajima M."/>
            <person name="Narusaka M."/>
            <person name="Seki M."/>
            <person name="Sakurai T."/>
            <person name="Satou M."/>
            <person name="Tamse R."/>
            <person name="Vaysberg M."/>
            <person name="Wallender E.K."/>
            <person name="Wong C."/>
            <person name="Yamamura Y."/>
            <person name="Yuan S."/>
            <person name="Shinozaki K."/>
            <person name="Davis R.W."/>
            <person name="Theologis A."/>
            <person name="Ecker J.R."/>
        </authorList>
    </citation>
    <scope>NUCLEOTIDE SEQUENCE [LARGE SCALE MRNA]</scope>
    <source>
        <strain>cv. Columbia</strain>
    </source>
</reference>
<reference key="4">
    <citation type="journal article" date="2006" name="Proc. Natl. Acad. Sci. U.S.A.">
        <title>AtALMT1, which encodes a malate transporter, is identified as one of several genes critical for aluminum tolerance in Arabidopsis.</title>
        <authorList>
            <person name="Hoekenga O.A."/>
            <person name="Maron L.G."/>
            <person name="Pineros M.A."/>
            <person name="Cancado G.M."/>
            <person name="Shaff J."/>
            <person name="Kobayashi Y."/>
            <person name="Ryan P.R."/>
            <person name="Dong B."/>
            <person name="Delhaize E."/>
            <person name="Sasaki T."/>
            <person name="Matsumoto H."/>
            <person name="Yamamoto Y."/>
            <person name="Koyama H."/>
            <person name="Kochian L.V."/>
        </authorList>
    </citation>
    <scope>GENE FAMILY</scope>
    <scope>NOMENCLATURE</scope>
</reference>
<reference key="5">
    <citation type="journal article" date="2007" name="Plant J.">
        <title>The Arabidopsis vacuolar malate channel is a member of the ALMT family.</title>
        <authorList>
            <person name="Kovermann P."/>
            <person name="Meyer S."/>
            <person name="Hoertensteiner S."/>
            <person name="Picco C."/>
            <person name="Scholz-Starke J."/>
            <person name="Ravera S."/>
            <person name="Lee Y."/>
            <person name="Martinoia E."/>
        </authorList>
    </citation>
    <scope>SUBCELLULAR LOCATION</scope>
</reference>
<reference key="6">
    <citation type="journal article" date="2009" name="Plant Physiol.">
        <title>Large-scale Arabidopsis phosphoproteome profiling reveals novel chloroplast kinase substrates and phosphorylation networks.</title>
        <authorList>
            <person name="Reiland S."/>
            <person name="Messerli G."/>
            <person name="Baerenfaller K."/>
            <person name="Gerrits B."/>
            <person name="Endler A."/>
            <person name="Grossmann J."/>
            <person name="Gruissem W."/>
            <person name="Baginsky S."/>
        </authorList>
    </citation>
    <scope>IDENTIFICATION BY MASS SPECTROMETRY [LARGE SCALE ANALYSIS]</scope>
</reference>
<organism>
    <name type="scientific">Arabidopsis thaliana</name>
    <name type="common">Mouse-ear cress</name>
    <dbReference type="NCBI Taxonomy" id="3702"/>
    <lineage>
        <taxon>Eukaryota</taxon>
        <taxon>Viridiplantae</taxon>
        <taxon>Streptophyta</taxon>
        <taxon>Embryophyta</taxon>
        <taxon>Tracheophyta</taxon>
        <taxon>Spermatophyta</taxon>
        <taxon>Magnoliopsida</taxon>
        <taxon>eudicotyledons</taxon>
        <taxon>Gunneridae</taxon>
        <taxon>Pentapetalae</taxon>
        <taxon>rosids</taxon>
        <taxon>malvids</taxon>
        <taxon>Brassicales</taxon>
        <taxon>Brassicaceae</taxon>
        <taxon>Camelineae</taxon>
        <taxon>Arabidopsis</taxon>
    </lineage>
</organism>